<evidence type="ECO:0000255" key="1">
    <source>
        <dbReference type="HAMAP-Rule" id="MF_00672"/>
    </source>
</evidence>
<proteinExistence type="inferred from homology"/>
<dbReference type="EMBL" id="CP000050">
    <property type="protein sequence ID" value="AAY50414.1"/>
    <property type="molecule type" value="Genomic_DNA"/>
</dbReference>
<dbReference type="RefSeq" id="WP_011036096.1">
    <property type="nucleotide sequence ID" value="NZ_CP155948.1"/>
</dbReference>
<dbReference type="SMR" id="Q4URA9"/>
<dbReference type="KEGG" id="xcb:XC_3370"/>
<dbReference type="HOGENOM" id="CLU_032288_1_0_6"/>
<dbReference type="Proteomes" id="UP000000420">
    <property type="component" value="Chromosome"/>
</dbReference>
<dbReference type="GO" id="GO:0005886">
    <property type="term" value="C:plasma membrane"/>
    <property type="evidence" value="ECO:0007669"/>
    <property type="project" value="UniProtKB-SubCell"/>
</dbReference>
<dbReference type="HAMAP" id="MF_00672">
    <property type="entry name" value="UPF0761"/>
    <property type="match status" value="1"/>
</dbReference>
<dbReference type="InterPro" id="IPR023679">
    <property type="entry name" value="UPF0761_bac"/>
</dbReference>
<dbReference type="InterPro" id="IPR017039">
    <property type="entry name" value="Virul_fac_BrkB"/>
</dbReference>
<dbReference type="NCBIfam" id="NF003256">
    <property type="entry name" value="PRK04214.1"/>
    <property type="match status" value="1"/>
</dbReference>
<dbReference type="NCBIfam" id="TIGR00765">
    <property type="entry name" value="yihY_not_rbn"/>
    <property type="match status" value="1"/>
</dbReference>
<dbReference type="PANTHER" id="PTHR30213">
    <property type="entry name" value="INNER MEMBRANE PROTEIN YHJD"/>
    <property type="match status" value="1"/>
</dbReference>
<dbReference type="PANTHER" id="PTHR30213:SF0">
    <property type="entry name" value="UPF0761 MEMBRANE PROTEIN YIHY"/>
    <property type="match status" value="1"/>
</dbReference>
<dbReference type="Pfam" id="PF03631">
    <property type="entry name" value="Virul_fac_BrkB"/>
    <property type="match status" value="1"/>
</dbReference>
<reference key="1">
    <citation type="journal article" date="2005" name="Genome Res.">
        <title>Comparative and functional genomic analyses of the pathogenicity of phytopathogen Xanthomonas campestris pv. campestris.</title>
        <authorList>
            <person name="Qian W."/>
            <person name="Jia Y."/>
            <person name="Ren S.-X."/>
            <person name="He Y.-Q."/>
            <person name="Feng J.-X."/>
            <person name="Lu L.-F."/>
            <person name="Sun Q."/>
            <person name="Ying G."/>
            <person name="Tang D.-J."/>
            <person name="Tang H."/>
            <person name="Wu W."/>
            <person name="Hao P."/>
            <person name="Wang L."/>
            <person name="Jiang B.-L."/>
            <person name="Zeng S."/>
            <person name="Gu W.-Y."/>
            <person name="Lu G."/>
            <person name="Rong L."/>
            <person name="Tian Y."/>
            <person name="Yao Z."/>
            <person name="Fu G."/>
            <person name="Chen B."/>
            <person name="Fang R."/>
            <person name="Qiang B."/>
            <person name="Chen Z."/>
            <person name="Zhao G.-P."/>
            <person name="Tang J.-L."/>
            <person name="He C."/>
        </authorList>
    </citation>
    <scope>NUCLEOTIDE SEQUENCE [LARGE SCALE GENOMIC DNA]</scope>
    <source>
        <strain>8004</strain>
    </source>
</reference>
<keyword id="KW-0997">Cell inner membrane</keyword>
<keyword id="KW-1003">Cell membrane</keyword>
<keyword id="KW-0472">Membrane</keyword>
<keyword id="KW-0812">Transmembrane</keyword>
<keyword id="KW-1133">Transmembrane helix</keyword>
<feature type="chain" id="PRO_0000201005" description="UPF0761 membrane protein XC_3370">
    <location>
        <begin position="1"/>
        <end position="425"/>
    </location>
</feature>
<feature type="transmembrane region" description="Helical" evidence="1">
    <location>
        <begin position="48"/>
        <end position="68"/>
    </location>
</feature>
<feature type="transmembrane region" description="Helical" evidence="1">
    <location>
        <begin position="105"/>
        <end position="125"/>
    </location>
</feature>
<feature type="transmembrane region" description="Helical" evidence="1">
    <location>
        <begin position="154"/>
        <end position="174"/>
    </location>
</feature>
<feature type="transmembrane region" description="Helical" evidence="1">
    <location>
        <begin position="182"/>
        <end position="202"/>
    </location>
</feature>
<feature type="transmembrane region" description="Helical" evidence="1">
    <location>
        <begin position="216"/>
        <end position="236"/>
    </location>
</feature>
<feature type="transmembrane region" description="Helical" evidence="1">
    <location>
        <begin position="250"/>
        <end position="270"/>
    </location>
</feature>
<comment type="subcellular location">
    <subcellularLocation>
        <location evidence="1">Cell inner membrane</location>
        <topology evidence="1">Multi-pass membrane protein</topology>
    </subcellularLocation>
</comment>
<comment type="similarity">
    <text evidence="1">Belongs to the UPF0761 family.</text>
</comment>
<protein>
    <recommendedName>
        <fullName evidence="1">UPF0761 membrane protein XC_3370</fullName>
    </recommendedName>
</protein>
<gene>
    <name type="ordered locus">XC_3370</name>
</gene>
<organism>
    <name type="scientific">Xanthomonas campestris pv. campestris (strain 8004)</name>
    <dbReference type="NCBI Taxonomy" id="314565"/>
    <lineage>
        <taxon>Bacteria</taxon>
        <taxon>Pseudomonadati</taxon>
        <taxon>Pseudomonadota</taxon>
        <taxon>Gammaproteobacteria</taxon>
        <taxon>Lysobacterales</taxon>
        <taxon>Lysobacteraceae</taxon>
        <taxon>Xanthomonas</taxon>
    </lineage>
</organism>
<sequence>MSRVNTMHQWKERLRDRARTASFGRFLWRRFLDDRLFQAAASLAYTTVFALVPLAIVVFGVLSAFPAFNEWKDALTDFIFNNFVPGAARSVQNYLNRSLEDLGKFTVAGMVALVASLLITLHSIEQTFNSIWRVAAARPKVTRFLIYWTVLTLGTMLAAASMAMAAYVFALPLFRTTEGQWLAEFAWRLAPMAVEFVCIVLIYRVVPQHAVRLRHALPGALLAVILMEIVKWGFGFYLGNFQTYQRIYGALSALPILLLWIYLSWVSVLLGASLASSMSAFRYQPEAMRLPPGFEIYGLLRLLGRFRQARLHGNGLDEDRILALEPMLTDTLMQELLCELKRIRLLRRDERGNWLLARDLDVVPLAELYESCQLRVPVEDRPLPCRDDPYGQAAAAALEQLRQPLRSVLAQPVGDLYTHLPGDPP</sequence>
<accession>Q4URA9</accession>
<name>Y3370_XANC8</name>